<dbReference type="EC" id="3.5.4.13" evidence="1"/>
<dbReference type="EMBL" id="CU928158">
    <property type="protein sequence ID" value="CAQ89654.1"/>
    <property type="molecule type" value="Genomic_DNA"/>
</dbReference>
<dbReference type="RefSeq" id="WP_001234767.1">
    <property type="nucleotide sequence ID" value="NC_011740.1"/>
</dbReference>
<dbReference type="SMR" id="B7LV29"/>
<dbReference type="GeneID" id="93775126"/>
<dbReference type="KEGG" id="efe:EFER_2151"/>
<dbReference type="HOGENOM" id="CLU_087476_2_0_6"/>
<dbReference type="OrthoDB" id="9780956at2"/>
<dbReference type="UniPathway" id="UPA00610">
    <property type="reaction ID" value="UER00665"/>
</dbReference>
<dbReference type="Proteomes" id="UP000000745">
    <property type="component" value="Chromosome"/>
</dbReference>
<dbReference type="GO" id="GO:0008829">
    <property type="term" value="F:dCTP deaminase activity"/>
    <property type="evidence" value="ECO:0007669"/>
    <property type="project" value="UniProtKB-UniRule"/>
</dbReference>
<dbReference type="GO" id="GO:0000166">
    <property type="term" value="F:nucleotide binding"/>
    <property type="evidence" value="ECO:0007669"/>
    <property type="project" value="UniProtKB-KW"/>
</dbReference>
<dbReference type="GO" id="GO:0006226">
    <property type="term" value="P:dUMP biosynthetic process"/>
    <property type="evidence" value="ECO:0007669"/>
    <property type="project" value="UniProtKB-UniPathway"/>
</dbReference>
<dbReference type="GO" id="GO:0006229">
    <property type="term" value="P:dUTP biosynthetic process"/>
    <property type="evidence" value="ECO:0007669"/>
    <property type="project" value="UniProtKB-UniRule"/>
</dbReference>
<dbReference type="GO" id="GO:0015949">
    <property type="term" value="P:nucleobase-containing small molecule interconversion"/>
    <property type="evidence" value="ECO:0007669"/>
    <property type="project" value="TreeGrafter"/>
</dbReference>
<dbReference type="CDD" id="cd07557">
    <property type="entry name" value="trimeric_dUTPase"/>
    <property type="match status" value="1"/>
</dbReference>
<dbReference type="FunFam" id="2.70.40.10:FF:000003">
    <property type="entry name" value="dCTP deaminase"/>
    <property type="match status" value="1"/>
</dbReference>
<dbReference type="Gene3D" id="2.70.40.10">
    <property type="match status" value="1"/>
</dbReference>
<dbReference type="HAMAP" id="MF_00146">
    <property type="entry name" value="dCTP_deaminase"/>
    <property type="match status" value="1"/>
</dbReference>
<dbReference type="InterPro" id="IPR011962">
    <property type="entry name" value="dCTP_deaminase"/>
</dbReference>
<dbReference type="InterPro" id="IPR036157">
    <property type="entry name" value="dUTPase-like_sf"/>
</dbReference>
<dbReference type="InterPro" id="IPR033704">
    <property type="entry name" value="dUTPase_trimeric"/>
</dbReference>
<dbReference type="NCBIfam" id="TIGR02274">
    <property type="entry name" value="dCTP_deam"/>
    <property type="match status" value="1"/>
</dbReference>
<dbReference type="PANTHER" id="PTHR42680">
    <property type="entry name" value="DCTP DEAMINASE"/>
    <property type="match status" value="1"/>
</dbReference>
<dbReference type="PANTHER" id="PTHR42680:SF3">
    <property type="entry name" value="DCTP DEAMINASE"/>
    <property type="match status" value="1"/>
</dbReference>
<dbReference type="Pfam" id="PF22769">
    <property type="entry name" value="DCD"/>
    <property type="match status" value="1"/>
</dbReference>
<dbReference type="SUPFAM" id="SSF51283">
    <property type="entry name" value="dUTPase-like"/>
    <property type="match status" value="1"/>
</dbReference>
<keyword id="KW-0378">Hydrolase</keyword>
<keyword id="KW-0546">Nucleotide metabolism</keyword>
<keyword id="KW-0547">Nucleotide-binding</keyword>
<name>DCD_ESCF3</name>
<gene>
    <name evidence="1" type="primary">dcd</name>
    <name type="ordered locus">EFER_2151</name>
</gene>
<evidence type="ECO:0000255" key="1">
    <source>
        <dbReference type="HAMAP-Rule" id="MF_00146"/>
    </source>
</evidence>
<evidence type="ECO:0000256" key="2">
    <source>
        <dbReference type="SAM" id="MobiDB-lite"/>
    </source>
</evidence>
<organism>
    <name type="scientific">Escherichia fergusonii (strain ATCC 35469 / DSM 13698 / CCUG 18766 / IAM 14443 / JCM 21226 / LMG 7866 / NBRC 102419 / NCTC 12128 / CDC 0568-73)</name>
    <dbReference type="NCBI Taxonomy" id="585054"/>
    <lineage>
        <taxon>Bacteria</taxon>
        <taxon>Pseudomonadati</taxon>
        <taxon>Pseudomonadota</taxon>
        <taxon>Gammaproteobacteria</taxon>
        <taxon>Enterobacterales</taxon>
        <taxon>Enterobacteriaceae</taxon>
        <taxon>Escherichia</taxon>
    </lineage>
</organism>
<feature type="chain" id="PRO_1000117974" description="dCTP deaminase">
    <location>
        <begin position="1"/>
        <end position="193"/>
    </location>
</feature>
<feature type="region of interest" description="Disordered" evidence="2">
    <location>
        <begin position="169"/>
        <end position="193"/>
    </location>
</feature>
<feature type="active site" description="Proton donor/acceptor" evidence="1">
    <location>
        <position position="138"/>
    </location>
</feature>
<feature type="binding site" evidence="1">
    <location>
        <begin position="110"/>
        <end position="115"/>
    </location>
    <ligand>
        <name>dCTP</name>
        <dbReference type="ChEBI" id="CHEBI:61481"/>
    </ligand>
</feature>
<feature type="binding site" evidence="1">
    <location>
        <position position="128"/>
    </location>
    <ligand>
        <name>dCTP</name>
        <dbReference type="ChEBI" id="CHEBI:61481"/>
    </ligand>
</feature>
<feature type="binding site" evidence="1">
    <location>
        <begin position="136"/>
        <end position="138"/>
    </location>
    <ligand>
        <name>dCTP</name>
        <dbReference type="ChEBI" id="CHEBI:61481"/>
    </ligand>
</feature>
<feature type="binding site" evidence="1">
    <location>
        <position position="171"/>
    </location>
    <ligand>
        <name>dCTP</name>
        <dbReference type="ChEBI" id="CHEBI:61481"/>
    </ligand>
</feature>
<feature type="binding site" evidence="1">
    <location>
        <position position="178"/>
    </location>
    <ligand>
        <name>dCTP</name>
        <dbReference type="ChEBI" id="CHEBI:61481"/>
    </ligand>
</feature>
<feature type="binding site" evidence="1">
    <location>
        <position position="182"/>
    </location>
    <ligand>
        <name>dCTP</name>
        <dbReference type="ChEBI" id="CHEBI:61481"/>
    </ligand>
</feature>
<reference key="1">
    <citation type="journal article" date="2009" name="PLoS Genet.">
        <title>Organised genome dynamics in the Escherichia coli species results in highly diverse adaptive paths.</title>
        <authorList>
            <person name="Touchon M."/>
            <person name="Hoede C."/>
            <person name="Tenaillon O."/>
            <person name="Barbe V."/>
            <person name="Baeriswyl S."/>
            <person name="Bidet P."/>
            <person name="Bingen E."/>
            <person name="Bonacorsi S."/>
            <person name="Bouchier C."/>
            <person name="Bouvet O."/>
            <person name="Calteau A."/>
            <person name="Chiapello H."/>
            <person name="Clermont O."/>
            <person name="Cruveiller S."/>
            <person name="Danchin A."/>
            <person name="Diard M."/>
            <person name="Dossat C."/>
            <person name="Karoui M.E."/>
            <person name="Frapy E."/>
            <person name="Garry L."/>
            <person name="Ghigo J.M."/>
            <person name="Gilles A.M."/>
            <person name="Johnson J."/>
            <person name="Le Bouguenec C."/>
            <person name="Lescat M."/>
            <person name="Mangenot S."/>
            <person name="Martinez-Jehanne V."/>
            <person name="Matic I."/>
            <person name="Nassif X."/>
            <person name="Oztas S."/>
            <person name="Petit M.A."/>
            <person name="Pichon C."/>
            <person name="Rouy Z."/>
            <person name="Ruf C.S."/>
            <person name="Schneider D."/>
            <person name="Tourret J."/>
            <person name="Vacherie B."/>
            <person name="Vallenet D."/>
            <person name="Medigue C."/>
            <person name="Rocha E.P.C."/>
            <person name="Denamur E."/>
        </authorList>
    </citation>
    <scope>NUCLEOTIDE SEQUENCE [LARGE SCALE GENOMIC DNA]</scope>
    <source>
        <strain>ATCC 35469 / DSM 13698 / BCRC 15582 / CCUG 18766 / IAM 14443 / JCM 21226 / LMG 7866 / NBRC 102419 / NCTC 12128 / CDC 0568-73</strain>
    </source>
</reference>
<sequence length="193" mass="21221">MRLCDRDIEAWLDEGRLSINPRPPVERINGATVDVRLGNKFRTFRGHTAAFIDLSGPKDEVSAALDRVMSDEIVLDEGEAFYLHPGELALAVTLESVTLPADLVGWLDGRSSLARLGLMVHVTAHRIDPGWSGCIVLEFYNSGKLPLALRPGMLIGALSFEPLSGPAARPYNRREDAKYRNQQGAVASRIDKD</sequence>
<accession>B7LV29</accession>
<protein>
    <recommendedName>
        <fullName evidence="1">dCTP deaminase</fullName>
        <ecNumber evidence="1">3.5.4.13</ecNumber>
    </recommendedName>
    <alternativeName>
        <fullName evidence="1">Deoxycytidine triphosphate deaminase</fullName>
    </alternativeName>
</protein>
<comment type="function">
    <text evidence="1">Catalyzes the deamination of dCTP to dUTP.</text>
</comment>
<comment type="catalytic activity">
    <reaction evidence="1">
        <text>dCTP + H2O + H(+) = dUTP + NH4(+)</text>
        <dbReference type="Rhea" id="RHEA:22680"/>
        <dbReference type="ChEBI" id="CHEBI:15377"/>
        <dbReference type="ChEBI" id="CHEBI:15378"/>
        <dbReference type="ChEBI" id="CHEBI:28938"/>
        <dbReference type="ChEBI" id="CHEBI:61481"/>
        <dbReference type="ChEBI" id="CHEBI:61555"/>
        <dbReference type="EC" id="3.5.4.13"/>
    </reaction>
</comment>
<comment type="pathway">
    <text evidence="1">Pyrimidine metabolism; dUMP biosynthesis; dUMP from dCTP (dUTP route): step 1/2.</text>
</comment>
<comment type="subunit">
    <text evidence="1">Homotrimer.</text>
</comment>
<comment type="similarity">
    <text evidence="1">Belongs to the dCTP deaminase family.</text>
</comment>
<proteinExistence type="inferred from homology"/>